<name>CL401_COCLU</name>
<dbReference type="EC" id="3.4.21.-" evidence="2"/>
<dbReference type="EMBL" id="EU622631">
    <property type="protein sequence ID" value="ACF19589.1"/>
    <property type="molecule type" value="mRNA"/>
</dbReference>
<dbReference type="SMR" id="B3V0K8"/>
<dbReference type="Allergome" id="3901">
    <property type="allergen name" value="Cur l 4"/>
</dbReference>
<dbReference type="Allergome" id="8438">
    <property type="allergen name" value="Cur l 4.0101"/>
</dbReference>
<dbReference type="GO" id="GO:0004252">
    <property type="term" value="F:serine-type endopeptidase activity"/>
    <property type="evidence" value="ECO:0000250"/>
    <property type="project" value="UniProtKB"/>
</dbReference>
<dbReference type="GO" id="GO:0006508">
    <property type="term" value="P:proteolysis"/>
    <property type="evidence" value="ECO:0000250"/>
    <property type="project" value="UniProtKB"/>
</dbReference>
<dbReference type="CDD" id="cd04077">
    <property type="entry name" value="Peptidases_S8_PCSK9_ProteinaseK_like"/>
    <property type="match status" value="1"/>
</dbReference>
<dbReference type="FunFam" id="3.30.70.80:FF:000006">
    <property type="entry name" value="Autophagic serine protease Alp2"/>
    <property type="match status" value="1"/>
</dbReference>
<dbReference type="FunFam" id="3.40.50.200:FF:000007">
    <property type="entry name" value="Subtilisin-like serine protease"/>
    <property type="match status" value="1"/>
</dbReference>
<dbReference type="Gene3D" id="3.30.70.80">
    <property type="entry name" value="Peptidase S8 propeptide/proteinase inhibitor I9"/>
    <property type="match status" value="1"/>
</dbReference>
<dbReference type="Gene3D" id="3.40.50.200">
    <property type="entry name" value="Peptidase S8/S53 domain"/>
    <property type="match status" value="1"/>
</dbReference>
<dbReference type="InterPro" id="IPR034193">
    <property type="entry name" value="PCSK9_ProteinaseK-like"/>
</dbReference>
<dbReference type="InterPro" id="IPR000209">
    <property type="entry name" value="Peptidase_S8/S53_dom"/>
</dbReference>
<dbReference type="InterPro" id="IPR036852">
    <property type="entry name" value="Peptidase_S8/S53_dom_sf"/>
</dbReference>
<dbReference type="InterPro" id="IPR022398">
    <property type="entry name" value="Peptidase_S8_His-AS"/>
</dbReference>
<dbReference type="InterPro" id="IPR023828">
    <property type="entry name" value="Peptidase_S8_Ser-AS"/>
</dbReference>
<dbReference type="InterPro" id="IPR050131">
    <property type="entry name" value="Peptidase_S8_subtilisin-like"/>
</dbReference>
<dbReference type="InterPro" id="IPR015500">
    <property type="entry name" value="Peptidase_S8_subtilisin-rel"/>
</dbReference>
<dbReference type="InterPro" id="IPR010259">
    <property type="entry name" value="S8pro/Inhibitor_I9"/>
</dbReference>
<dbReference type="InterPro" id="IPR037045">
    <property type="entry name" value="S8pro/Inhibitor_I9_sf"/>
</dbReference>
<dbReference type="PANTHER" id="PTHR43806:SF11">
    <property type="entry name" value="CEREVISIN-RELATED"/>
    <property type="match status" value="1"/>
</dbReference>
<dbReference type="PANTHER" id="PTHR43806">
    <property type="entry name" value="PEPTIDASE S8"/>
    <property type="match status" value="1"/>
</dbReference>
<dbReference type="Pfam" id="PF05922">
    <property type="entry name" value="Inhibitor_I9"/>
    <property type="match status" value="1"/>
</dbReference>
<dbReference type="Pfam" id="PF00082">
    <property type="entry name" value="Peptidase_S8"/>
    <property type="match status" value="1"/>
</dbReference>
<dbReference type="PRINTS" id="PR00723">
    <property type="entry name" value="SUBTILISIN"/>
</dbReference>
<dbReference type="SUPFAM" id="SSF52743">
    <property type="entry name" value="Subtilisin-like"/>
    <property type="match status" value="1"/>
</dbReference>
<dbReference type="PROSITE" id="PS51892">
    <property type="entry name" value="SUBTILASE"/>
    <property type="match status" value="1"/>
</dbReference>
<dbReference type="PROSITE" id="PS00137">
    <property type="entry name" value="SUBTILASE_HIS"/>
    <property type="match status" value="1"/>
</dbReference>
<dbReference type="PROSITE" id="PS00138">
    <property type="entry name" value="SUBTILASE_SER"/>
    <property type="match status" value="1"/>
</dbReference>
<evidence type="ECO:0000250" key="1">
    <source>
        <dbReference type="UniProtKB" id="Q5JIZ5"/>
    </source>
</evidence>
<evidence type="ECO:0000250" key="2">
    <source>
        <dbReference type="UniProtKB" id="Q9Y749"/>
    </source>
</evidence>
<evidence type="ECO:0000250" key="3">
    <source>
        <dbReference type="UniProtKB" id="Q9Y755"/>
    </source>
</evidence>
<evidence type="ECO:0000255" key="4"/>
<evidence type="ECO:0000255" key="5">
    <source>
        <dbReference type="PROSITE-ProRule" id="PRU00498"/>
    </source>
</evidence>
<evidence type="ECO:0000255" key="6">
    <source>
        <dbReference type="PROSITE-ProRule" id="PRU01240"/>
    </source>
</evidence>
<evidence type="ECO:0000256" key="7">
    <source>
        <dbReference type="SAM" id="MobiDB-lite"/>
    </source>
</evidence>
<evidence type="ECO:0000269" key="8">
    <source>
    </source>
</evidence>
<evidence type="ECO:0000303" key="9">
    <source>
    </source>
</evidence>
<evidence type="ECO:0000305" key="10"/>
<evidence type="ECO:0000312" key="11">
    <source>
        <dbReference type="EMBL" id="ACF19589.1"/>
    </source>
</evidence>
<accession>B3V0K8</accession>
<reference key="1">
    <citation type="journal article" date="2011" name="Immunobiology">
        <title>Molecular and immunological characterization of subtilisin like serine protease, a major allergen of Curvularia lunata.</title>
        <authorList>
            <person name="Tripathi P."/>
            <person name="Nair S."/>
            <person name="Singh B.P."/>
            <person name="Arora N."/>
        </authorList>
    </citation>
    <scope>NUCLEOTIDE SEQUENCE [MRNA]</scope>
    <scope>ALLERGEN</scope>
</reference>
<feature type="signal peptide" evidence="4">
    <location>
        <begin position="1"/>
        <end position="15"/>
    </location>
</feature>
<feature type="propeptide" id="PRO_0000446900" description="Removed in mature form" evidence="3 4">
    <location>
        <begin position="16"/>
        <end position="135"/>
    </location>
</feature>
<feature type="chain" id="PRO_5012203775" description="Subtilisin-like serine protease Cur l 4.0101" evidence="3 10">
    <location>
        <begin position="136"/>
        <end position="458"/>
    </location>
</feature>
<feature type="propeptide" id="PRO_0000446901" description="Removed in mature form" evidence="10">
    <location>
        <begin position="459"/>
        <end position="506"/>
    </location>
</feature>
<feature type="domain" description="Inhibitor I9" evidence="4">
    <location>
        <begin position="43"/>
        <end position="134"/>
    </location>
</feature>
<feature type="domain" description="Peptidase S8" evidence="6">
    <location>
        <begin position="147"/>
        <end position="453"/>
    </location>
</feature>
<feature type="region of interest" description="Disordered" evidence="7">
    <location>
        <begin position="59"/>
        <end position="79"/>
    </location>
</feature>
<feature type="compositionally biased region" description="Basic and acidic residues" evidence="7">
    <location>
        <begin position="69"/>
        <end position="79"/>
    </location>
</feature>
<feature type="active site" description="Charge relay system" evidence="6">
    <location>
        <position position="183"/>
    </location>
</feature>
<feature type="active site" description="Charge relay system" evidence="6">
    <location>
        <position position="215"/>
    </location>
</feature>
<feature type="active site" description="Charge relay system" evidence="6">
    <location>
        <position position="381"/>
    </location>
</feature>
<feature type="site" description="Important for catalytic activity" evidence="1">
    <location>
        <position position="316"/>
    </location>
</feature>
<feature type="glycosylation site" description="N-linked (GlcNAc...) asparagine" evidence="5">
    <location>
        <position position="245"/>
    </location>
</feature>
<feature type="glycosylation site" description="N-linked (GlcNAc...) asparagine" evidence="5">
    <location>
        <position position="285"/>
    </location>
</feature>
<feature type="glycosylation site" description="N-linked (GlcNAc...) asparagine" evidence="5">
    <location>
        <position position="448"/>
    </location>
</feature>
<keyword id="KW-0020">Allergen</keyword>
<keyword id="KW-0325">Glycoprotein</keyword>
<keyword id="KW-0378">Hydrolase</keyword>
<keyword id="KW-0645">Protease</keyword>
<keyword id="KW-0720">Serine protease</keyword>
<keyword id="KW-0732">Signal</keyword>
<keyword id="KW-0865">Zymogen</keyword>
<proteinExistence type="evidence at protein level"/>
<sequence length="506" mass="53762">MKYSLIAALPALAAASPTFSTETIHKQSAPVLSSTSAKEVPNSYMVVFKKHVKDASKHHDWVQSVHSKNTQERMELRKRSSDLPVSNEVFAGLKHTYELSGLKGYSGHFDDETLEAIRNHPDVDYIERDSEVRILGGDEPETENNSPWGLARISHRDSLSFGTWNKYLYAADGGEGVDVYVIDTGTNVDHVDFEGRAKWGKTIPNGDADEDGNGHGTHCSGTVAGKKYGVAKKAHVYAVKVLRSNGSGTMSDVVKGVEFAAKSHSEAVSAAKNGKKKGFKGSTANMSLGGGKSTTLDMAVNAAVDAGLHFAVAAGNDNADSCNYSPAAAENAVTVGASTLLDERAYFSNYGKCNDIFAPGLNILSTWIGSKHATNTISGTSMASPHIAGLLAYMLSLQPAKDSAYAVADITPKKLKANLIAIGTVGALSDVPSNTANVLAWNGGGSSNYTDIIEKGGYTVKKAASKEEEKESEFRITIPSLSELEDDFEKAKESAGRKAHHVGGKL</sequence>
<organism evidence="11">
    <name type="scientific">Cochliobolus lunatus</name>
    <name type="common">Filamentous fungus</name>
    <name type="synonym">Curvularia lunata</name>
    <dbReference type="NCBI Taxonomy" id="5503"/>
    <lineage>
        <taxon>Eukaryota</taxon>
        <taxon>Fungi</taxon>
        <taxon>Dikarya</taxon>
        <taxon>Ascomycota</taxon>
        <taxon>Pezizomycotina</taxon>
        <taxon>Dothideomycetes</taxon>
        <taxon>Pleosporomycetidae</taxon>
        <taxon>Pleosporales</taxon>
        <taxon>Pleosporineae</taxon>
        <taxon>Pleosporaceae</taxon>
        <taxon>Curvularia</taxon>
    </lineage>
</organism>
<protein>
    <recommendedName>
        <fullName evidence="10">Subtilisin-like serine protease Cur l 4.0101</fullName>
        <ecNumber evidence="2">3.4.21.-</ecNumber>
    </recommendedName>
    <alternativeName>
        <fullName evidence="9">Subtilisin-like serine protease</fullName>
    </alternativeName>
    <allergenName evidence="10">Cur l 4.0101</allergenName>
</protein>
<comment type="function">
    <text evidence="2">Serine protease.</text>
</comment>
<comment type="allergen">
    <text evidence="8">Causes an allergic reaction in human. Binds to IgE in 81% of the 16 patients sensitive to C.lunata. Induces histamine release from basophils.</text>
</comment>
<comment type="similarity">
    <text evidence="4 10">Belongs to the peptidase S8 family.</text>
</comment>